<accession>B1HNX3</accession>
<protein>
    <recommendedName>
        <fullName evidence="1">Adapter protein MecA</fullName>
    </recommendedName>
</protein>
<gene>
    <name evidence="1" type="primary">mecA</name>
    <name type="ordered locus">Bsph_1217</name>
</gene>
<proteinExistence type="inferred from homology"/>
<sequence length="222" mass="26446">MDIERVNENTLKLFITYNDIEDRGYSREEIWYNRAKGEQLFWDMIDEVNTEDYFDVEGPIWIHINASEVGLEIIVTRAHILKDGETLDGHSNFDEHKEMFAPFDEVGDDLLSQLTQFGDMDESELFMDTDIYVYKFKDIDELIPVAKRMTDELVDSSLFKYENWYYLVVDFGNADEELNRHDRNAVIKEFLTPSNFTIHRLEEYGEKIMEFNCFETVRKYFA</sequence>
<reference key="1">
    <citation type="journal article" date="2008" name="J. Bacteriol.">
        <title>Complete genome sequence of the mosquitocidal bacterium Bacillus sphaericus C3-41 and comparison with those of closely related Bacillus species.</title>
        <authorList>
            <person name="Hu X."/>
            <person name="Fan W."/>
            <person name="Han B."/>
            <person name="Liu H."/>
            <person name="Zheng D."/>
            <person name="Li Q."/>
            <person name="Dong W."/>
            <person name="Yan J."/>
            <person name="Gao M."/>
            <person name="Berry C."/>
            <person name="Yuan Z."/>
        </authorList>
    </citation>
    <scope>NUCLEOTIDE SEQUENCE [LARGE SCALE GENOMIC DNA]</scope>
    <source>
        <strain>C3-41</strain>
    </source>
</reference>
<comment type="function">
    <text evidence="1">Enables the recognition and targeting of unfolded and aggregated proteins to the ClpC protease or to other proteins involved in proteolysis.</text>
</comment>
<comment type="subunit">
    <text evidence="1">Homodimer.</text>
</comment>
<comment type="domain">
    <text>The N-terminal domain probably binds unfolded/aggregated proteins; the C-terminal domain interacts with ClpC.</text>
</comment>
<comment type="similarity">
    <text evidence="1">Belongs to the MecA family.</text>
</comment>
<feature type="chain" id="PRO_1000137283" description="Adapter protein MecA">
    <location>
        <begin position="1"/>
        <end position="222"/>
    </location>
</feature>
<dbReference type="EMBL" id="CP000817">
    <property type="protein sequence ID" value="ACA38825.1"/>
    <property type="molecule type" value="Genomic_DNA"/>
</dbReference>
<dbReference type="RefSeq" id="WP_008181512.1">
    <property type="nucleotide sequence ID" value="NC_010382.1"/>
</dbReference>
<dbReference type="SMR" id="B1HNX3"/>
<dbReference type="EnsemblBacteria" id="ACA38825">
    <property type="protein sequence ID" value="ACA38825"/>
    <property type="gene ID" value="Bsph_1217"/>
</dbReference>
<dbReference type="GeneID" id="29442711"/>
<dbReference type="KEGG" id="lsp:Bsph_1217"/>
<dbReference type="HOGENOM" id="CLU_071496_2_1_9"/>
<dbReference type="Proteomes" id="UP000002164">
    <property type="component" value="Chromosome"/>
</dbReference>
<dbReference type="GO" id="GO:0030674">
    <property type="term" value="F:protein-macromolecule adaptor activity"/>
    <property type="evidence" value="ECO:0007669"/>
    <property type="project" value="UniProtKB-UniRule"/>
</dbReference>
<dbReference type="GO" id="GO:0045808">
    <property type="term" value="P:negative regulation of establishment of competence for transformation"/>
    <property type="evidence" value="ECO:0007669"/>
    <property type="project" value="UniProtKB-UniRule"/>
</dbReference>
<dbReference type="GO" id="GO:0042174">
    <property type="term" value="P:negative regulation of sporulation resulting in formation of a cellular spore"/>
    <property type="evidence" value="ECO:0007669"/>
    <property type="project" value="UniProtKB-UniRule"/>
</dbReference>
<dbReference type="Gene3D" id="3.30.70.1950">
    <property type="match status" value="1"/>
</dbReference>
<dbReference type="HAMAP" id="MF_01124">
    <property type="entry name" value="MecA"/>
    <property type="match status" value="1"/>
</dbReference>
<dbReference type="InterPro" id="IPR038471">
    <property type="entry name" value="MecA_C_sf"/>
</dbReference>
<dbReference type="InterPro" id="IPR008681">
    <property type="entry name" value="Neg-reg_MecA"/>
</dbReference>
<dbReference type="NCBIfam" id="NF002644">
    <property type="entry name" value="PRK02315.1-5"/>
    <property type="match status" value="1"/>
</dbReference>
<dbReference type="PANTHER" id="PTHR39161">
    <property type="entry name" value="ADAPTER PROTEIN MECA"/>
    <property type="match status" value="1"/>
</dbReference>
<dbReference type="PANTHER" id="PTHR39161:SF2">
    <property type="entry name" value="ADAPTER PROTEIN MECA 2"/>
    <property type="match status" value="1"/>
</dbReference>
<dbReference type="Pfam" id="PF05389">
    <property type="entry name" value="MecA"/>
    <property type="match status" value="1"/>
</dbReference>
<dbReference type="PIRSF" id="PIRSF029008">
    <property type="entry name" value="MecA"/>
    <property type="match status" value="1"/>
</dbReference>
<evidence type="ECO:0000255" key="1">
    <source>
        <dbReference type="HAMAP-Rule" id="MF_01124"/>
    </source>
</evidence>
<name>MECA_LYSSC</name>
<organism>
    <name type="scientific">Lysinibacillus sphaericus (strain C3-41)</name>
    <dbReference type="NCBI Taxonomy" id="444177"/>
    <lineage>
        <taxon>Bacteria</taxon>
        <taxon>Bacillati</taxon>
        <taxon>Bacillota</taxon>
        <taxon>Bacilli</taxon>
        <taxon>Bacillales</taxon>
        <taxon>Bacillaceae</taxon>
        <taxon>Lysinibacillus</taxon>
    </lineage>
</organism>